<name>Y028_MYCTU</name>
<sequence length="101" mass="10904">MTDANPAFDTVHPSGHILVRSCRGGYMHSVSLSEAAMETDAETLAEAILLTADVSCLKALLEVRNEIVAAGHTPSAQVPTTDDLNVAIEKLLAHQLRRRNR</sequence>
<keyword id="KW-0007">Acetylation</keyword>
<keyword id="KW-1185">Reference proteome</keyword>
<evidence type="ECO:0007744" key="1">
    <source>
    </source>
</evidence>
<proteinExistence type="evidence at protein level"/>
<reference key="1">
    <citation type="journal article" date="1998" name="Nature">
        <title>Deciphering the biology of Mycobacterium tuberculosis from the complete genome sequence.</title>
        <authorList>
            <person name="Cole S.T."/>
            <person name="Brosch R."/>
            <person name="Parkhill J."/>
            <person name="Garnier T."/>
            <person name="Churcher C.M."/>
            <person name="Harris D.E."/>
            <person name="Gordon S.V."/>
            <person name="Eiglmeier K."/>
            <person name="Gas S."/>
            <person name="Barry C.E. III"/>
            <person name="Tekaia F."/>
            <person name="Badcock K."/>
            <person name="Basham D."/>
            <person name="Brown D."/>
            <person name="Chillingworth T."/>
            <person name="Connor R."/>
            <person name="Davies R.M."/>
            <person name="Devlin K."/>
            <person name="Feltwell T."/>
            <person name="Gentles S."/>
            <person name="Hamlin N."/>
            <person name="Holroyd S."/>
            <person name="Hornsby T."/>
            <person name="Jagels K."/>
            <person name="Krogh A."/>
            <person name="McLean J."/>
            <person name="Moule S."/>
            <person name="Murphy L.D."/>
            <person name="Oliver S."/>
            <person name="Osborne J."/>
            <person name="Quail M.A."/>
            <person name="Rajandream M.A."/>
            <person name="Rogers J."/>
            <person name="Rutter S."/>
            <person name="Seeger K."/>
            <person name="Skelton S."/>
            <person name="Squares S."/>
            <person name="Squares R."/>
            <person name="Sulston J.E."/>
            <person name="Taylor K."/>
            <person name="Whitehead S."/>
            <person name="Barrell B.G."/>
        </authorList>
    </citation>
    <scope>NUCLEOTIDE SEQUENCE [LARGE SCALE GENOMIC DNA]</scope>
    <source>
        <strain>ATCC 25618 / H37Rv</strain>
    </source>
</reference>
<reference key="2">
    <citation type="journal article" date="2011" name="Mol. Cell. Proteomics">
        <title>Proteogenomic analysis of Mycobacterium tuberculosis by high resolution mass spectrometry.</title>
        <authorList>
            <person name="Kelkar D.S."/>
            <person name="Kumar D."/>
            <person name="Kumar P."/>
            <person name="Balakrishnan L."/>
            <person name="Muthusamy B."/>
            <person name="Yadav A.K."/>
            <person name="Shrivastava P."/>
            <person name="Marimuthu A."/>
            <person name="Anand S."/>
            <person name="Sundaram H."/>
            <person name="Kingsbury R."/>
            <person name="Harsha H.C."/>
            <person name="Nair B."/>
            <person name="Prasad T.S."/>
            <person name="Chauhan D.S."/>
            <person name="Katoch K."/>
            <person name="Katoch V.M."/>
            <person name="Kumar P."/>
            <person name="Chaerkady R."/>
            <person name="Ramachandran S."/>
            <person name="Dash D."/>
            <person name="Pandey A."/>
        </authorList>
    </citation>
    <scope>ACETYLATION [LARGE SCALE ANALYSIS] AT THR-2</scope>
    <scope>CLEAVAGE OF INITIATOR METHIONINE [LARGE SCALE ANALYSIS]</scope>
    <scope>IDENTIFICATION BY MASS SPECTROMETRY [LARGE SCALE ANALYSIS]</scope>
    <source>
        <strain>ATCC 25618 / H37Rv</strain>
    </source>
</reference>
<protein>
    <recommendedName>
        <fullName>Uncharacterized protein Rv0028</fullName>
    </recommendedName>
</protein>
<organism>
    <name type="scientific">Mycobacterium tuberculosis (strain ATCC 25618 / H37Rv)</name>
    <dbReference type="NCBI Taxonomy" id="83332"/>
    <lineage>
        <taxon>Bacteria</taxon>
        <taxon>Bacillati</taxon>
        <taxon>Actinomycetota</taxon>
        <taxon>Actinomycetes</taxon>
        <taxon>Mycobacteriales</taxon>
        <taxon>Mycobacteriaceae</taxon>
        <taxon>Mycobacterium</taxon>
        <taxon>Mycobacterium tuberculosis complex</taxon>
    </lineage>
</organism>
<gene>
    <name type="ordered locus">Rv0028</name>
    <name type="ORF">MTCY10H4.28</name>
</gene>
<feature type="initiator methionine" description="Removed" evidence="1">
    <location>
        <position position="1"/>
    </location>
</feature>
<feature type="chain" id="PRO_0000103646" description="Uncharacterized protein Rv0028">
    <location>
        <begin position="2"/>
        <end position="101"/>
    </location>
</feature>
<feature type="modified residue" description="N-acetylthreonine" evidence="1">
    <location>
        <position position="2"/>
    </location>
</feature>
<accession>P9WM97</accession>
<accession>L0T2C4</accession>
<accession>P64669</accession>
<accession>P71598</accession>
<dbReference type="EMBL" id="AL123456">
    <property type="protein sequence ID" value="CCP42750.1"/>
    <property type="molecule type" value="Genomic_DNA"/>
</dbReference>
<dbReference type="PIR" id="B70701">
    <property type="entry name" value="B70701"/>
</dbReference>
<dbReference type="RefSeq" id="NP_214542.1">
    <property type="nucleotide sequence ID" value="NC_000962.3"/>
</dbReference>
<dbReference type="RefSeq" id="WP_003400405.1">
    <property type="nucleotide sequence ID" value="NZ_NVQJ01000005.1"/>
</dbReference>
<dbReference type="SMR" id="P9WM97"/>
<dbReference type="STRING" id="83332.Rv0028"/>
<dbReference type="iPTMnet" id="P9WM97"/>
<dbReference type="PaxDb" id="83332-Rv0028"/>
<dbReference type="GeneID" id="885812"/>
<dbReference type="KEGG" id="mtu:Rv0028"/>
<dbReference type="KEGG" id="mtv:RVBD_0028"/>
<dbReference type="TubercuList" id="Rv0028"/>
<dbReference type="eggNOG" id="ENOG5031KHD">
    <property type="taxonomic scope" value="Bacteria"/>
</dbReference>
<dbReference type="InParanoid" id="P9WM97"/>
<dbReference type="OrthoDB" id="4741416at2"/>
<dbReference type="Proteomes" id="UP000001584">
    <property type="component" value="Chromosome"/>
</dbReference>
<dbReference type="InterPro" id="IPR024426">
    <property type="entry name" value="DUF2694"/>
</dbReference>
<dbReference type="Pfam" id="PF10904">
    <property type="entry name" value="DUF2694"/>
    <property type="match status" value="1"/>
</dbReference>